<comment type="function">
    <text evidence="1">Formation of pseudouridine at positions 38, 39 and 40 in the anticodon stem and loop of transfer RNAs.</text>
</comment>
<comment type="catalytic activity">
    <reaction evidence="1">
        <text>uridine(38/39/40) in tRNA = pseudouridine(38/39/40) in tRNA</text>
        <dbReference type="Rhea" id="RHEA:22376"/>
        <dbReference type="Rhea" id="RHEA-COMP:10085"/>
        <dbReference type="Rhea" id="RHEA-COMP:10087"/>
        <dbReference type="ChEBI" id="CHEBI:65314"/>
        <dbReference type="ChEBI" id="CHEBI:65315"/>
        <dbReference type="EC" id="5.4.99.12"/>
    </reaction>
</comment>
<comment type="subunit">
    <text evidence="1">Homodimer.</text>
</comment>
<comment type="similarity">
    <text evidence="1">Belongs to the tRNA pseudouridine synthase TruA family.</text>
</comment>
<gene>
    <name evidence="1" type="primary">truA</name>
    <name type="ordered locus">CJE0914</name>
</gene>
<accession>Q5HUW9</accession>
<dbReference type="EC" id="5.4.99.12" evidence="1"/>
<dbReference type="EMBL" id="CP000025">
    <property type="protein sequence ID" value="AAW35251.1"/>
    <property type="molecule type" value="Genomic_DNA"/>
</dbReference>
<dbReference type="SMR" id="Q5HUW9"/>
<dbReference type="KEGG" id="cjr:CJE0914"/>
<dbReference type="HOGENOM" id="CLU_014673_0_1_7"/>
<dbReference type="GO" id="GO:0003723">
    <property type="term" value="F:RNA binding"/>
    <property type="evidence" value="ECO:0007669"/>
    <property type="project" value="InterPro"/>
</dbReference>
<dbReference type="GO" id="GO:0160147">
    <property type="term" value="F:tRNA pseudouridine(38-40) synthase activity"/>
    <property type="evidence" value="ECO:0007669"/>
    <property type="project" value="UniProtKB-EC"/>
</dbReference>
<dbReference type="GO" id="GO:0031119">
    <property type="term" value="P:tRNA pseudouridine synthesis"/>
    <property type="evidence" value="ECO:0007669"/>
    <property type="project" value="UniProtKB-UniRule"/>
</dbReference>
<dbReference type="CDD" id="cd02570">
    <property type="entry name" value="PseudoU_synth_EcTruA"/>
    <property type="match status" value="1"/>
</dbReference>
<dbReference type="Gene3D" id="3.30.70.660">
    <property type="entry name" value="Pseudouridine synthase I, catalytic domain, C-terminal subdomain"/>
    <property type="match status" value="1"/>
</dbReference>
<dbReference type="Gene3D" id="3.30.70.580">
    <property type="entry name" value="Pseudouridine synthase I, catalytic domain, N-terminal subdomain"/>
    <property type="match status" value="1"/>
</dbReference>
<dbReference type="HAMAP" id="MF_00171">
    <property type="entry name" value="TruA"/>
    <property type="match status" value="1"/>
</dbReference>
<dbReference type="InterPro" id="IPR020103">
    <property type="entry name" value="PsdUridine_synth_cat_dom_sf"/>
</dbReference>
<dbReference type="InterPro" id="IPR001406">
    <property type="entry name" value="PsdUridine_synth_TruA"/>
</dbReference>
<dbReference type="InterPro" id="IPR020097">
    <property type="entry name" value="PsdUridine_synth_TruA_a/b_dom"/>
</dbReference>
<dbReference type="InterPro" id="IPR020095">
    <property type="entry name" value="PsdUridine_synth_TruA_C"/>
</dbReference>
<dbReference type="InterPro" id="IPR020094">
    <property type="entry name" value="TruA/RsuA/RluB/E/F_N"/>
</dbReference>
<dbReference type="NCBIfam" id="TIGR00071">
    <property type="entry name" value="hisT_truA"/>
    <property type="match status" value="1"/>
</dbReference>
<dbReference type="PANTHER" id="PTHR11142">
    <property type="entry name" value="PSEUDOURIDYLATE SYNTHASE"/>
    <property type="match status" value="1"/>
</dbReference>
<dbReference type="PANTHER" id="PTHR11142:SF0">
    <property type="entry name" value="TRNA PSEUDOURIDINE SYNTHASE-LIKE 1"/>
    <property type="match status" value="1"/>
</dbReference>
<dbReference type="Pfam" id="PF01416">
    <property type="entry name" value="PseudoU_synth_1"/>
    <property type="match status" value="2"/>
</dbReference>
<dbReference type="PIRSF" id="PIRSF001430">
    <property type="entry name" value="tRNA_psdUrid_synth"/>
    <property type="match status" value="1"/>
</dbReference>
<dbReference type="SUPFAM" id="SSF55120">
    <property type="entry name" value="Pseudouridine synthase"/>
    <property type="match status" value="1"/>
</dbReference>
<reference key="1">
    <citation type="journal article" date="2005" name="PLoS Biol.">
        <title>Major structural differences and novel potential virulence mechanisms from the genomes of multiple Campylobacter species.</title>
        <authorList>
            <person name="Fouts D.E."/>
            <person name="Mongodin E.F."/>
            <person name="Mandrell R.E."/>
            <person name="Miller W.G."/>
            <person name="Rasko D.A."/>
            <person name="Ravel J."/>
            <person name="Brinkac L.M."/>
            <person name="DeBoy R.T."/>
            <person name="Parker C.T."/>
            <person name="Daugherty S.C."/>
            <person name="Dodson R.J."/>
            <person name="Durkin A.S."/>
            <person name="Madupu R."/>
            <person name="Sullivan S.A."/>
            <person name="Shetty J.U."/>
            <person name="Ayodeji M.A."/>
            <person name="Shvartsbeyn A."/>
            <person name="Schatz M.C."/>
            <person name="Badger J.H."/>
            <person name="Fraser C.M."/>
            <person name="Nelson K.E."/>
        </authorList>
    </citation>
    <scope>NUCLEOTIDE SEQUENCE [LARGE SCALE GENOMIC DNA]</scope>
    <source>
        <strain>RM1221</strain>
    </source>
</reference>
<keyword id="KW-0413">Isomerase</keyword>
<keyword id="KW-0819">tRNA processing</keyword>
<protein>
    <recommendedName>
        <fullName evidence="1">tRNA pseudouridine synthase A</fullName>
        <ecNumber evidence="1">5.4.99.12</ecNumber>
    </recommendedName>
    <alternativeName>
        <fullName evidence="1">tRNA pseudouridine(38-40) synthase</fullName>
    </alternativeName>
    <alternativeName>
        <fullName evidence="1">tRNA pseudouridylate synthase I</fullName>
    </alternativeName>
    <alternativeName>
        <fullName evidence="1">tRNA-uridine isomerase I</fullName>
    </alternativeName>
</protein>
<name>TRUA_CAMJR</name>
<sequence>MKIKIIFSYDGTAFLGSATQPHKKGVQDALSGALSHLGIFSPLLMASRTDKGVHASYAVASVECGDYFTNLEYLQKQLNKFSHPFIHIKKIEKVKDDFEVRFDVKSREYRYIFSHSSYSPFMASYVHFYPKFDLDKANELLGFFVGKKDLKFFCKSGGDNKTTLREIFIARAYAYKDFSIFHFKANGFLRGQIRLSVASVLKVLEGKMSEKELKEQIEAKKQYNHFLAPPNGLYLSRICY</sequence>
<feature type="chain" id="PRO_0000057355" description="tRNA pseudouridine synthase A">
    <location>
        <begin position="1"/>
        <end position="240"/>
    </location>
</feature>
<feature type="active site" description="Nucleophile" evidence="1">
    <location>
        <position position="50"/>
    </location>
</feature>
<feature type="binding site" evidence="1">
    <location>
        <position position="109"/>
    </location>
    <ligand>
        <name>substrate</name>
    </ligand>
</feature>
<organism>
    <name type="scientific">Campylobacter jejuni (strain RM1221)</name>
    <dbReference type="NCBI Taxonomy" id="195099"/>
    <lineage>
        <taxon>Bacteria</taxon>
        <taxon>Pseudomonadati</taxon>
        <taxon>Campylobacterota</taxon>
        <taxon>Epsilonproteobacteria</taxon>
        <taxon>Campylobacterales</taxon>
        <taxon>Campylobacteraceae</taxon>
        <taxon>Campylobacter</taxon>
    </lineage>
</organism>
<proteinExistence type="inferred from homology"/>
<evidence type="ECO:0000255" key="1">
    <source>
        <dbReference type="HAMAP-Rule" id="MF_00171"/>
    </source>
</evidence>